<reference key="1">
    <citation type="submission" date="2008-02" db="EMBL/GenBank/DDBJ databases">
        <title>Complete sequence of Pseudomonas putida W619.</title>
        <authorList>
            <person name="Copeland A."/>
            <person name="Lucas S."/>
            <person name="Lapidus A."/>
            <person name="Barry K."/>
            <person name="Detter J.C."/>
            <person name="Glavina del Rio T."/>
            <person name="Dalin E."/>
            <person name="Tice H."/>
            <person name="Pitluck S."/>
            <person name="Chain P."/>
            <person name="Malfatti S."/>
            <person name="Shin M."/>
            <person name="Vergez L."/>
            <person name="Schmutz J."/>
            <person name="Larimer F."/>
            <person name="Land M."/>
            <person name="Hauser L."/>
            <person name="Kyrpides N."/>
            <person name="Kim E."/>
            <person name="Taghavi S."/>
            <person name="Vangronsveld D."/>
            <person name="van der Lelie D."/>
            <person name="Richardson P."/>
        </authorList>
    </citation>
    <scope>NUCLEOTIDE SEQUENCE [LARGE SCALE GENOMIC DNA]</scope>
    <source>
        <strain>W619</strain>
    </source>
</reference>
<accession>B1J1W8</accession>
<proteinExistence type="inferred from homology"/>
<comment type="function">
    <text evidence="1">This protein is one of the early assembly proteins of the 50S ribosomal subunit, although it is not seen to bind rRNA by itself. It is important during the early stages of 50S assembly.</text>
</comment>
<comment type="subunit">
    <text evidence="1">Part of the 50S ribosomal subunit.</text>
</comment>
<comment type="similarity">
    <text evidence="1">Belongs to the universal ribosomal protein uL13 family.</text>
</comment>
<name>RL13_PSEPW</name>
<evidence type="ECO:0000255" key="1">
    <source>
        <dbReference type="HAMAP-Rule" id="MF_01366"/>
    </source>
</evidence>
<evidence type="ECO:0000305" key="2"/>
<gene>
    <name evidence="1" type="primary">rplM</name>
    <name type="ordered locus">PputW619_0922</name>
</gene>
<organism>
    <name type="scientific">Pseudomonas putida (strain W619)</name>
    <dbReference type="NCBI Taxonomy" id="390235"/>
    <lineage>
        <taxon>Bacteria</taxon>
        <taxon>Pseudomonadati</taxon>
        <taxon>Pseudomonadota</taxon>
        <taxon>Gammaproteobacteria</taxon>
        <taxon>Pseudomonadales</taxon>
        <taxon>Pseudomonadaceae</taxon>
        <taxon>Pseudomonas</taxon>
    </lineage>
</organism>
<sequence>MKTFTAKPETVKREWFVVDAAGQTLGRLATEIASRLRGKHKPEYTPHVDTGDYIVVINAEQIRVTGAKSSDKMYYSHSGFPGGIKEINFEKLIAKAPERVIETAVKGMLPKNPLGRDMYRKLKVYAGAAHPHTAQQPQELKI</sequence>
<dbReference type="EMBL" id="CP000949">
    <property type="protein sequence ID" value="ACA71427.1"/>
    <property type="molecule type" value="Genomic_DNA"/>
</dbReference>
<dbReference type="SMR" id="B1J1W8"/>
<dbReference type="STRING" id="390235.PputW619_0922"/>
<dbReference type="KEGG" id="ppw:PputW619_0922"/>
<dbReference type="eggNOG" id="COG0102">
    <property type="taxonomic scope" value="Bacteria"/>
</dbReference>
<dbReference type="HOGENOM" id="CLU_082184_2_2_6"/>
<dbReference type="OrthoDB" id="9801330at2"/>
<dbReference type="GO" id="GO:0022625">
    <property type="term" value="C:cytosolic large ribosomal subunit"/>
    <property type="evidence" value="ECO:0007669"/>
    <property type="project" value="TreeGrafter"/>
</dbReference>
<dbReference type="GO" id="GO:0003729">
    <property type="term" value="F:mRNA binding"/>
    <property type="evidence" value="ECO:0007669"/>
    <property type="project" value="TreeGrafter"/>
</dbReference>
<dbReference type="GO" id="GO:0003735">
    <property type="term" value="F:structural constituent of ribosome"/>
    <property type="evidence" value="ECO:0007669"/>
    <property type="project" value="InterPro"/>
</dbReference>
<dbReference type="GO" id="GO:0017148">
    <property type="term" value="P:negative regulation of translation"/>
    <property type="evidence" value="ECO:0007669"/>
    <property type="project" value="TreeGrafter"/>
</dbReference>
<dbReference type="GO" id="GO:0006412">
    <property type="term" value="P:translation"/>
    <property type="evidence" value="ECO:0007669"/>
    <property type="project" value="UniProtKB-UniRule"/>
</dbReference>
<dbReference type="CDD" id="cd00392">
    <property type="entry name" value="Ribosomal_L13"/>
    <property type="match status" value="1"/>
</dbReference>
<dbReference type="FunFam" id="3.90.1180.10:FF:000001">
    <property type="entry name" value="50S ribosomal protein L13"/>
    <property type="match status" value="1"/>
</dbReference>
<dbReference type="Gene3D" id="3.90.1180.10">
    <property type="entry name" value="Ribosomal protein L13"/>
    <property type="match status" value="1"/>
</dbReference>
<dbReference type="HAMAP" id="MF_01366">
    <property type="entry name" value="Ribosomal_uL13"/>
    <property type="match status" value="1"/>
</dbReference>
<dbReference type="InterPro" id="IPR005822">
    <property type="entry name" value="Ribosomal_uL13"/>
</dbReference>
<dbReference type="InterPro" id="IPR005823">
    <property type="entry name" value="Ribosomal_uL13_bac-type"/>
</dbReference>
<dbReference type="InterPro" id="IPR023563">
    <property type="entry name" value="Ribosomal_uL13_CS"/>
</dbReference>
<dbReference type="InterPro" id="IPR036899">
    <property type="entry name" value="Ribosomal_uL13_sf"/>
</dbReference>
<dbReference type="NCBIfam" id="TIGR01066">
    <property type="entry name" value="rplM_bact"/>
    <property type="match status" value="1"/>
</dbReference>
<dbReference type="PANTHER" id="PTHR11545:SF2">
    <property type="entry name" value="LARGE RIBOSOMAL SUBUNIT PROTEIN UL13M"/>
    <property type="match status" value="1"/>
</dbReference>
<dbReference type="PANTHER" id="PTHR11545">
    <property type="entry name" value="RIBOSOMAL PROTEIN L13"/>
    <property type="match status" value="1"/>
</dbReference>
<dbReference type="Pfam" id="PF00572">
    <property type="entry name" value="Ribosomal_L13"/>
    <property type="match status" value="1"/>
</dbReference>
<dbReference type="PIRSF" id="PIRSF002181">
    <property type="entry name" value="Ribosomal_L13"/>
    <property type="match status" value="1"/>
</dbReference>
<dbReference type="SUPFAM" id="SSF52161">
    <property type="entry name" value="Ribosomal protein L13"/>
    <property type="match status" value="1"/>
</dbReference>
<dbReference type="PROSITE" id="PS00783">
    <property type="entry name" value="RIBOSOMAL_L13"/>
    <property type="match status" value="1"/>
</dbReference>
<protein>
    <recommendedName>
        <fullName evidence="1">Large ribosomal subunit protein uL13</fullName>
    </recommendedName>
    <alternativeName>
        <fullName evidence="2">50S ribosomal protein L13</fullName>
    </alternativeName>
</protein>
<keyword id="KW-0687">Ribonucleoprotein</keyword>
<keyword id="KW-0689">Ribosomal protein</keyword>
<feature type="chain" id="PRO_1000144167" description="Large ribosomal subunit protein uL13">
    <location>
        <begin position="1"/>
        <end position="142"/>
    </location>
</feature>